<protein>
    <recommendedName>
        <fullName evidence="5">RxLR effector protein Avh52</fullName>
    </recommendedName>
    <alternativeName>
        <fullName evidence="5">Avirulence homolog protein 52</fullName>
    </alternativeName>
</protein>
<proteinExistence type="evidence at protein level"/>
<evidence type="ECO:0000255" key="1"/>
<evidence type="ECO:0000269" key="2">
    <source>
    </source>
</evidence>
<evidence type="ECO:0000269" key="3">
    <source>
    </source>
</evidence>
<evidence type="ECO:0000269" key="4">
    <source>
    </source>
</evidence>
<evidence type="ECO:0000303" key="5">
    <source>
    </source>
</evidence>
<evidence type="ECO:0000305" key="6"/>
<evidence type="ECO:0000305" key="7">
    <source>
    </source>
</evidence>
<evidence type="ECO:0000305" key="8">
    <source>
    </source>
</evidence>
<feature type="signal peptide" evidence="1">
    <location>
        <begin position="1"/>
        <end position="21"/>
    </location>
</feature>
<feature type="chain" id="PRO_5007659774" description="RxLR effector protein Avh52">
    <location>
        <begin position="22"/>
        <end position="122"/>
    </location>
</feature>
<feature type="region of interest" description="TAP1-binding" evidence="4">
    <location>
        <begin position="69"/>
        <end position="86"/>
    </location>
</feature>
<feature type="region of interest" description="Nuclear localization signal (NLS)" evidence="4">
    <location>
        <begin position="87"/>
        <end position="98"/>
    </location>
</feature>
<feature type="short sequence motif" description="RxLR-dEER" evidence="8">
    <location>
        <begin position="50"/>
        <end position="68"/>
    </location>
</feature>
<organism>
    <name type="scientific">Phytophthora sojae</name>
    <name type="common">Soybean stem and root rot agent</name>
    <name type="synonym">Phytophthora megasperma f. sp. glycines</name>
    <dbReference type="NCBI Taxonomy" id="67593"/>
    <lineage>
        <taxon>Eukaryota</taxon>
        <taxon>Sar</taxon>
        <taxon>Stramenopiles</taxon>
        <taxon>Oomycota</taxon>
        <taxon>Peronosporales</taxon>
        <taxon>Peronosporaceae</taxon>
        <taxon>Phytophthora</taxon>
    </lineage>
</organism>
<sequence length="122" mass="13583">MRLTSILVLVIAATFHTTGTALTLTKDSKAGIANGDSPASGDFIDANSARLLRRVEKDKVDYEQDEQRSFGALKDAVKKLNPVTAVKKFFKQRARRKKVIQTARNADDNLAWAMRKVYNEAN</sequence>
<name>AVH52_PHYSO</name>
<reference key="1">
    <citation type="journal article" date="2011" name="Plant Cell">
        <title>Transcriptional programming and functional interactions within the Phytophthora sojae RXLR effector repertoire.</title>
        <authorList>
            <person name="Wang Q."/>
            <person name="Han C."/>
            <person name="Ferreira A.O."/>
            <person name="Yu X."/>
            <person name="Ye W."/>
            <person name="Tripathy S."/>
            <person name="Kale S.D."/>
            <person name="Gu B."/>
            <person name="Sheng Y."/>
            <person name="Sui Y."/>
            <person name="Wang X."/>
            <person name="Zhang Z."/>
            <person name="Cheng B."/>
            <person name="Dong S."/>
            <person name="Shan W."/>
            <person name="Zheng X."/>
            <person name="Dou D."/>
            <person name="Tyler B.M."/>
            <person name="Wang Y."/>
        </authorList>
    </citation>
    <scope>NUCLEOTIDE SEQUENCE [GENOMIC DNA]</scope>
    <scope>IDENTIFICATION</scope>
    <scope>FUNCTION</scope>
    <scope>INDUCTION</scope>
    <scope>DOMAIN</scope>
    <source>
        <strain>P7064</strain>
        <strain>P7074</strain>
        <strain>P7076</strain>
    </source>
</reference>
<reference key="2">
    <citation type="journal article" date="2015" name="Plant Cell">
        <title>A Phytophthora sojae glycoside hydrolase 12 protein is a major virulence factor during soybean infection and is recognized as a PAMP.</title>
        <authorList>
            <person name="Ma Z."/>
            <person name="Song T."/>
            <person name="Zhu L."/>
            <person name="Ye W."/>
            <person name="Wang Y."/>
            <person name="Shao Y."/>
            <person name="Dong S."/>
            <person name="Zhang Z."/>
            <person name="Dou D."/>
            <person name="Zheng X."/>
            <person name="Tyler B.M."/>
            <person name="Wang Y."/>
        </authorList>
    </citation>
    <scope>FUNCTION</scope>
</reference>
<reference key="3">
    <citation type="journal article" date="2018" name="Elife">
        <title>A Phytophthora effector recruits a host cytoplasmic transacetylase into nuclear speckles to enhance plant susceptibility.</title>
        <authorList>
            <person name="Li H."/>
            <person name="Wang H."/>
            <person name="Jing M."/>
            <person name="Zhu J."/>
            <person name="Guo B."/>
            <person name="Wang Y."/>
            <person name="Lin Y."/>
            <person name="Chen H."/>
            <person name="Kong L."/>
            <person name="Ma Z."/>
            <person name="Wang Y."/>
            <person name="Ye W."/>
            <person name="Dong S."/>
            <person name="Tyler B."/>
            <person name="Wang Y."/>
        </authorList>
    </citation>
    <scope>FUNCTION</scope>
    <scope>DISRUPTION PHENOTYPE</scope>
    <scope>INTERACTION WITH HOST TAP1</scope>
    <scope>SUBCELLULAR LOCATION</scope>
    <scope>DOMAIN</scope>
</reference>
<gene>
    <name evidence="5" type="primary">Avh52</name>
</gene>
<accession>G1FR37</accession>
<keyword id="KW-1048">Host nucleus</keyword>
<keyword id="KW-0964">Secreted</keyword>
<keyword id="KW-0732">Signal</keyword>
<keyword id="KW-0843">Virulence</keyword>
<dbReference type="EMBL" id="JN253760">
    <property type="protein sequence ID" value="AEK80573.1"/>
    <property type="molecule type" value="Genomic_DNA"/>
</dbReference>
<dbReference type="EMBL" id="JN253761">
    <property type="protein sequence ID" value="AEK80574.1"/>
    <property type="molecule type" value="Genomic_DNA"/>
</dbReference>
<dbReference type="EMBL" id="JN253762">
    <property type="protein sequence ID" value="AEK80575.1"/>
    <property type="molecule type" value="Genomic_DNA"/>
</dbReference>
<dbReference type="VEuPathDB" id="FungiDB:PHYSODRAFT_355041"/>
<dbReference type="GO" id="GO:0005576">
    <property type="term" value="C:extracellular region"/>
    <property type="evidence" value="ECO:0007669"/>
    <property type="project" value="UniProtKB-SubCell"/>
</dbReference>
<dbReference type="GO" id="GO:0042025">
    <property type="term" value="C:host cell nucleus"/>
    <property type="evidence" value="ECO:0007669"/>
    <property type="project" value="UniProtKB-SubCell"/>
</dbReference>
<dbReference type="InterPro" id="IPR031825">
    <property type="entry name" value="RXLR"/>
</dbReference>
<dbReference type="Pfam" id="PF16810">
    <property type="entry name" value="RXLR"/>
    <property type="match status" value="1"/>
</dbReference>
<comment type="function">
    <text evidence="2 3 4">Effector that suppresses plant defense responses during the early stages of pathogen infection (PubMed:21653195, PubMed:26163574, PubMed:30346270). Suppresses cell death induced by effectors and PAMPs in plant hosts (PubMed:26163574, PubMed:30346270). Interacts with host acetyltransferase TAP1 and causes TAP1 relocation into the nucleus where it acetylates histones H2A and H3 during early infection, thereby promoting susceptibility of host plant to P.sojae (PubMed:30346270).</text>
</comment>
<comment type="subunit">
    <text evidence="4">Interacts with host acetyl transferase TAP1.</text>
</comment>
<comment type="subcellular location">
    <subcellularLocation>
        <location evidence="4">Secreted</location>
    </subcellularLocation>
    <subcellularLocation>
        <location evidence="4">Host nucleus</location>
    </subcellularLocation>
</comment>
<comment type="induction">
    <text evidence="2">Expression is strongly up-regulated during the early stages of infection.</text>
</comment>
<comment type="domain">
    <text evidence="7">The RxLR-dEER motif acts to carry the protein into the host cell cytoplasm through binding to cell surface phosphatidylinositol-3-phosphate.</text>
</comment>
<comment type="domain">
    <text evidence="4">Residues 69 to 86 are required for the interaction with host TAP1 and its re-localization into nuclear speckles.</text>
</comment>
<comment type="domain">
    <text evidence="4">The nuclear localization signal (NLS) is required for localization into nucleus.</text>
</comment>
<comment type="disruption phenotype">
    <text evidence="4">Leads to smaller lesions on soybean seedlings.</text>
</comment>
<comment type="similarity">
    <text evidence="6">Belongs to the RxLR effector family.</text>
</comment>